<protein>
    <recommendedName>
        <fullName evidence="1">Acetate kinase</fullName>
        <ecNumber evidence="1">2.7.2.1</ecNumber>
    </recommendedName>
    <alternativeName>
        <fullName evidence="1">Acetokinase</fullName>
    </alternativeName>
</protein>
<dbReference type="EC" id="2.7.2.1" evidence="1"/>
<dbReference type="EMBL" id="CP000382">
    <property type="protein sequence ID" value="ABK60556.1"/>
    <property type="molecule type" value="Genomic_DNA"/>
</dbReference>
<dbReference type="RefSeq" id="WP_011722294.1">
    <property type="nucleotide sequence ID" value="NC_008593.1"/>
</dbReference>
<dbReference type="SMR" id="A0Q0Z5"/>
<dbReference type="STRING" id="386415.NT01CX_2224"/>
<dbReference type="KEGG" id="cno:NT01CX_2224"/>
<dbReference type="eggNOG" id="COG0282">
    <property type="taxonomic scope" value="Bacteria"/>
</dbReference>
<dbReference type="HOGENOM" id="CLU_020352_0_1_9"/>
<dbReference type="UniPathway" id="UPA00340">
    <property type="reaction ID" value="UER00458"/>
</dbReference>
<dbReference type="Proteomes" id="UP000008220">
    <property type="component" value="Chromosome"/>
</dbReference>
<dbReference type="GO" id="GO:0005737">
    <property type="term" value="C:cytoplasm"/>
    <property type="evidence" value="ECO:0007669"/>
    <property type="project" value="UniProtKB-SubCell"/>
</dbReference>
<dbReference type="GO" id="GO:0008776">
    <property type="term" value="F:acetate kinase activity"/>
    <property type="evidence" value="ECO:0007669"/>
    <property type="project" value="UniProtKB-UniRule"/>
</dbReference>
<dbReference type="GO" id="GO:0005524">
    <property type="term" value="F:ATP binding"/>
    <property type="evidence" value="ECO:0007669"/>
    <property type="project" value="UniProtKB-KW"/>
</dbReference>
<dbReference type="GO" id="GO:0000287">
    <property type="term" value="F:magnesium ion binding"/>
    <property type="evidence" value="ECO:0007669"/>
    <property type="project" value="UniProtKB-UniRule"/>
</dbReference>
<dbReference type="GO" id="GO:0006083">
    <property type="term" value="P:acetate metabolic process"/>
    <property type="evidence" value="ECO:0007669"/>
    <property type="project" value="TreeGrafter"/>
</dbReference>
<dbReference type="GO" id="GO:0006085">
    <property type="term" value="P:acetyl-CoA biosynthetic process"/>
    <property type="evidence" value="ECO:0007669"/>
    <property type="project" value="UniProtKB-UniRule"/>
</dbReference>
<dbReference type="CDD" id="cd24010">
    <property type="entry name" value="ASKHA_NBD_AcK_PK"/>
    <property type="match status" value="1"/>
</dbReference>
<dbReference type="Gene3D" id="3.30.420.40">
    <property type="match status" value="2"/>
</dbReference>
<dbReference type="HAMAP" id="MF_00020">
    <property type="entry name" value="Acetate_kinase"/>
    <property type="match status" value="1"/>
</dbReference>
<dbReference type="InterPro" id="IPR004372">
    <property type="entry name" value="Ac/propionate_kinase"/>
</dbReference>
<dbReference type="InterPro" id="IPR000890">
    <property type="entry name" value="Aliphatic_acid_kin_short-chain"/>
</dbReference>
<dbReference type="InterPro" id="IPR023865">
    <property type="entry name" value="Aliphatic_acid_kinase_CS"/>
</dbReference>
<dbReference type="InterPro" id="IPR043129">
    <property type="entry name" value="ATPase_NBD"/>
</dbReference>
<dbReference type="NCBIfam" id="TIGR00016">
    <property type="entry name" value="ackA"/>
    <property type="match status" value="1"/>
</dbReference>
<dbReference type="PANTHER" id="PTHR21060">
    <property type="entry name" value="ACETATE KINASE"/>
    <property type="match status" value="1"/>
</dbReference>
<dbReference type="PANTHER" id="PTHR21060:SF15">
    <property type="entry name" value="ACETATE KINASE-RELATED"/>
    <property type="match status" value="1"/>
</dbReference>
<dbReference type="Pfam" id="PF00871">
    <property type="entry name" value="Acetate_kinase"/>
    <property type="match status" value="1"/>
</dbReference>
<dbReference type="PIRSF" id="PIRSF000722">
    <property type="entry name" value="Acetate_prop_kin"/>
    <property type="match status" value="1"/>
</dbReference>
<dbReference type="PRINTS" id="PR00471">
    <property type="entry name" value="ACETATEKNASE"/>
</dbReference>
<dbReference type="SUPFAM" id="SSF53067">
    <property type="entry name" value="Actin-like ATPase domain"/>
    <property type="match status" value="2"/>
</dbReference>
<dbReference type="PROSITE" id="PS01075">
    <property type="entry name" value="ACETATE_KINASE_1"/>
    <property type="match status" value="1"/>
</dbReference>
<dbReference type="PROSITE" id="PS01076">
    <property type="entry name" value="ACETATE_KINASE_2"/>
    <property type="match status" value="1"/>
</dbReference>
<accession>A0Q0Z5</accession>
<keyword id="KW-0067">ATP-binding</keyword>
<keyword id="KW-0963">Cytoplasm</keyword>
<keyword id="KW-0418">Kinase</keyword>
<keyword id="KW-0460">Magnesium</keyword>
<keyword id="KW-0479">Metal-binding</keyword>
<keyword id="KW-0547">Nucleotide-binding</keyword>
<keyword id="KW-1185">Reference proteome</keyword>
<keyword id="KW-0808">Transferase</keyword>
<sequence>MKILVINCGSSSLKYQLIDMTSEQPIAQGLVERIGIEGSVLTHKVNGKKYKIEEEMKDHKKAIELVLNALVNEEYGVIKNMEEISAVGHRVVHGGEKYAESVLIDSEVMEALEDFVKLAPLHNPPNIIGINACKELMSSTPMVAVFDTAFHQTLPDYAYMYSLPYDLYEKHGIRKYGFHGTSHKYVSAMAAKVLGKNIEDLKLITCHLGNGSSLAAVKNGKCVDTSMGFTPLAGLTMGTRCGDIDPAIVTFLIKELNYSVDEVNKIMNKESGVLGISGISSDFRDILKAASEGNERAELALNIFKNKVIQYIGAYTAVMGGVDAIIFTAGVGENSEPIRKRIISDLGFLGIKLDEEKNKVMGETETISTEDSKVKVLAIPTNEELMIARDTKEIVEKNNIK</sequence>
<organism>
    <name type="scientific">Clostridium novyi (strain NT)</name>
    <dbReference type="NCBI Taxonomy" id="386415"/>
    <lineage>
        <taxon>Bacteria</taxon>
        <taxon>Bacillati</taxon>
        <taxon>Bacillota</taxon>
        <taxon>Clostridia</taxon>
        <taxon>Eubacteriales</taxon>
        <taxon>Clostridiaceae</taxon>
        <taxon>Clostridium</taxon>
    </lineage>
</organism>
<gene>
    <name evidence="1" type="primary">ackA</name>
    <name type="ordered locus">NT01CX_2224</name>
</gene>
<comment type="function">
    <text evidence="1">Catalyzes the formation of acetyl phosphate from acetate and ATP. Can also catalyze the reverse reaction.</text>
</comment>
<comment type="catalytic activity">
    <reaction evidence="1">
        <text>acetate + ATP = acetyl phosphate + ADP</text>
        <dbReference type="Rhea" id="RHEA:11352"/>
        <dbReference type="ChEBI" id="CHEBI:22191"/>
        <dbReference type="ChEBI" id="CHEBI:30089"/>
        <dbReference type="ChEBI" id="CHEBI:30616"/>
        <dbReference type="ChEBI" id="CHEBI:456216"/>
        <dbReference type="EC" id="2.7.2.1"/>
    </reaction>
</comment>
<comment type="cofactor">
    <cofactor evidence="1">
        <name>Mg(2+)</name>
        <dbReference type="ChEBI" id="CHEBI:18420"/>
    </cofactor>
    <cofactor evidence="1">
        <name>Mn(2+)</name>
        <dbReference type="ChEBI" id="CHEBI:29035"/>
    </cofactor>
    <text evidence="1">Mg(2+). Can also accept Mn(2+).</text>
</comment>
<comment type="pathway">
    <text evidence="1">Metabolic intermediate biosynthesis; acetyl-CoA biosynthesis; acetyl-CoA from acetate: step 1/2.</text>
</comment>
<comment type="subunit">
    <text evidence="1">Homodimer.</text>
</comment>
<comment type="subcellular location">
    <subcellularLocation>
        <location evidence="1">Cytoplasm</location>
    </subcellularLocation>
</comment>
<comment type="similarity">
    <text evidence="1">Belongs to the acetokinase family.</text>
</comment>
<feature type="chain" id="PRO_1000002224" description="Acetate kinase">
    <location>
        <begin position="1"/>
        <end position="401"/>
    </location>
</feature>
<feature type="active site" description="Proton donor/acceptor" evidence="1">
    <location>
        <position position="147"/>
    </location>
</feature>
<feature type="binding site" evidence="1">
    <location>
        <position position="7"/>
    </location>
    <ligand>
        <name>Mg(2+)</name>
        <dbReference type="ChEBI" id="CHEBI:18420"/>
    </ligand>
</feature>
<feature type="binding site" evidence="1">
    <location>
        <position position="14"/>
    </location>
    <ligand>
        <name>ATP</name>
        <dbReference type="ChEBI" id="CHEBI:30616"/>
    </ligand>
</feature>
<feature type="binding site" evidence="1">
    <location>
        <position position="90"/>
    </location>
    <ligand>
        <name>substrate</name>
    </ligand>
</feature>
<feature type="binding site" evidence="1">
    <location>
        <begin position="207"/>
        <end position="211"/>
    </location>
    <ligand>
        <name>ATP</name>
        <dbReference type="ChEBI" id="CHEBI:30616"/>
    </ligand>
</feature>
<feature type="binding site" evidence="1">
    <location>
        <begin position="282"/>
        <end position="284"/>
    </location>
    <ligand>
        <name>ATP</name>
        <dbReference type="ChEBI" id="CHEBI:30616"/>
    </ligand>
</feature>
<feature type="binding site" evidence="1">
    <location>
        <begin position="330"/>
        <end position="334"/>
    </location>
    <ligand>
        <name>ATP</name>
        <dbReference type="ChEBI" id="CHEBI:30616"/>
    </ligand>
</feature>
<feature type="binding site" evidence="1">
    <location>
        <position position="383"/>
    </location>
    <ligand>
        <name>Mg(2+)</name>
        <dbReference type="ChEBI" id="CHEBI:18420"/>
    </ligand>
</feature>
<feature type="site" description="Transition state stabilizer" evidence="1">
    <location>
        <position position="179"/>
    </location>
</feature>
<feature type="site" description="Transition state stabilizer" evidence="1">
    <location>
        <position position="240"/>
    </location>
</feature>
<reference key="1">
    <citation type="journal article" date="2006" name="Nat. Biotechnol.">
        <title>The genome and transcriptomes of the anti-tumor agent Clostridium novyi-NT.</title>
        <authorList>
            <person name="Bettegowda C."/>
            <person name="Huang X."/>
            <person name="Lin J."/>
            <person name="Cheong I."/>
            <person name="Kohli M."/>
            <person name="Szabo S.A."/>
            <person name="Zhang X."/>
            <person name="Diaz L.A. Jr."/>
            <person name="Velculescu V.E."/>
            <person name="Parmigiani G."/>
            <person name="Kinzler K.W."/>
            <person name="Vogelstein B."/>
            <person name="Zhou S."/>
        </authorList>
    </citation>
    <scope>NUCLEOTIDE SEQUENCE [LARGE SCALE GENOMIC DNA]</scope>
    <source>
        <strain>NT</strain>
    </source>
</reference>
<name>ACKA_CLONN</name>
<proteinExistence type="inferred from homology"/>
<evidence type="ECO:0000255" key="1">
    <source>
        <dbReference type="HAMAP-Rule" id="MF_00020"/>
    </source>
</evidence>